<sequence length="370" mass="39095">MDPSETAALHHCSADSSPADEARVPQSTELIPRRPVSRSPTCARCRNHGVTAHLKGHKRLCLFQACECHKCVLILERRRVMAAQVALRRQQEAQLKRHLAQGLMKGATPLKAPLRVKKGAIRPGIPSGKENIAPQPQSPHGAVPLVLTPPGKENYGPLLLSRPPEALPLPWTPVPPGPWGPGHWLPPGLSMPPPVVCRLLCQEPAVPLHPFPGFDPGTSLRLPTHGTLPTCPGSRSVLTAPLSGEPQGPPNLPHTCSTLILQSCGTPDSLLLQPQAPGASCLAWTSGPSERQLQREAAEALVGLKDSSQAPRLTPSVPPNPAWISLLHPCGPPAPPGGRGFQPVGPPLRPSPGSSVSLHIGRLGSISLLS</sequence>
<keyword id="KW-0221">Differentiation</keyword>
<keyword id="KW-0238">DNA-binding</keyword>
<keyword id="KW-0479">Metal-binding</keyword>
<keyword id="KW-0539">Nucleus</keyword>
<keyword id="KW-1185">Reference proteome</keyword>
<keyword id="KW-0726">Sexual differentiation</keyword>
<keyword id="KW-0804">Transcription</keyword>
<keyword id="KW-0805">Transcription regulation</keyword>
<keyword id="KW-0862">Zinc</keyword>
<protein>
    <recommendedName>
        <fullName>Doublesex- and mab-3-related transcription factor C2</fullName>
    </recommendedName>
    <alternativeName>
        <fullName>Doublesex- and mab-3-related transcription factor 7</fullName>
    </alternativeName>
</protein>
<organism>
    <name type="scientific">Mus musculus</name>
    <name type="common">Mouse</name>
    <dbReference type="NCBI Taxonomy" id="10090"/>
    <lineage>
        <taxon>Eukaryota</taxon>
        <taxon>Metazoa</taxon>
        <taxon>Chordata</taxon>
        <taxon>Craniata</taxon>
        <taxon>Vertebrata</taxon>
        <taxon>Euteleostomi</taxon>
        <taxon>Mammalia</taxon>
        <taxon>Eutheria</taxon>
        <taxon>Euarchontoglires</taxon>
        <taxon>Glires</taxon>
        <taxon>Rodentia</taxon>
        <taxon>Myomorpha</taxon>
        <taxon>Muroidea</taxon>
        <taxon>Muridae</taxon>
        <taxon>Murinae</taxon>
        <taxon>Mus</taxon>
        <taxon>Mus</taxon>
    </lineage>
</organism>
<evidence type="ECO:0000255" key="1">
    <source>
        <dbReference type="PROSITE-ProRule" id="PRU00070"/>
    </source>
</evidence>
<evidence type="ECO:0000256" key="2">
    <source>
        <dbReference type="SAM" id="MobiDB-lite"/>
    </source>
</evidence>
<evidence type="ECO:0000305" key="3"/>
<gene>
    <name type="primary">Dmrtc2</name>
    <name type="synonym">Dmrt7</name>
</gene>
<comment type="function">
    <text>May be involved in sexual development.</text>
</comment>
<comment type="subcellular location">
    <subcellularLocation>
        <location evidence="1">Nucleus</location>
    </subcellularLocation>
</comment>
<comment type="tissue specificity">
    <text>Expressed in testis. Highly expressed in ovary.</text>
</comment>
<comment type="developmental stage">
    <text>Expressed in gonads from 11.5 dpc.</text>
</comment>
<comment type="similarity">
    <text evidence="3">Belongs to the DMRT family.</text>
</comment>
<feature type="chain" id="PRO_0000244107" description="Doublesex- and mab-3-related transcription factor C2">
    <location>
        <begin position="1"/>
        <end position="370"/>
    </location>
</feature>
<feature type="DNA-binding region" description="DM" evidence="1">
    <location>
        <begin position="42"/>
        <end position="89"/>
    </location>
</feature>
<feature type="region of interest" description="Disordered" evidence="2">
    <location>
        <begin position="1"/>
        <end position="38"/>
    </location>
</feature>
<feature type="region of interest" description="Disordered" evidence="2">
    <location>
        <begin position="334"/>
        <end position="356"/>
    </location>
</feature>
<name>DMRTD_MOUSE</name>
<reference key="1">
    <citation type="journal article" date="2003" name="Gene Expr. Patterns">
        <title>Sexually dimorphic expression of multiple doublesex-related genes in the embryonic mouse gonad.</title>
        <authorList>
            <person name="Kim S."/>
            <person name="Kettlewell J.R."/>
            <person name="Anderson R.C."/>
            <person name="Bardwell V.J."/>
            <person name="Zarkower D."/>
        </authorList>
    </citation>
    <scope>NUCLEOTIDE SEQUENCE [MRNA]</scope>
    <source>
        <strain>C57BL/6J</strain>
        <tissue>Testis</tissue>
    </source>
</reference>
<reference key="2">
    <citation type="journal article" date="2004" name="Genome Res.">
        <title>The status, quality, and expansion of the NIH full-length cDNA project: the Mammalian Gene Collection (MGC).</title>
        <authorList>
            <consortium name="The MGC Project Team"/>
        </authorList>
    </citation>
    <scope>NUCLEOTIDE SEQUENCE [LARGE SCALE MRNA]</scope>
    <source>
        <tissue>Brain</tissue>
        <tissue>Testis</tissue>
    </source>
</reference>
<dbReference type="EMBL" id="AF542046">
    <property type="protein sequence ID" value="AAN77233.1"/>
    <property type="molecule type" value="mRNA"/>
</dbReference>
<dbReference type="EMBL" id="BC100434">
    <property type="protein sequence ID" value="AAI00435.1"/>
    <property type="molecule type" value="mRNA"/>
</dbReference>
<dbReference type="EMBL" id="BC138203">
    <property type="protein sequence ID" value="AAI38204.1"/>
    <property type="molecule type" value="mRNA"/>
</dbReference>
<dbReference type="EMBL" id="BC145988">
    <property type="protein sequence ID" value="AAI45989.1"/>
    <property type="molecule type" value="mRNA"/>
</dbReference>
<dbReference type="CCDS" id="CCDS20965.1"/>
<dbReference type="RefSeq" id="NP_082008.1">
    <property type="nucleotide sequence ID" value="NM_027732.2"/>
</dbReference>
<dbReference type="RefSeq" id="XP_006540422.1">
    <property type="nucleotide sequence ID" value="XM_006540359.4"/>
</dbReference>
<dbReference type="SMR" id="Q8CGW9"/>
<dbReference type="BioGRID" id="214575">
    <property type="interactions" value="8"/>
</dbReference>
<dbReference type="FunCoup" id="Q8CGW9">
    <property type="interactions" value="221"/>
</dbReference>
<dbReference type="IntAct" id="Q8CGW9">
    <property type="interactions" value="8"/>
</dbReference>
<dbReference type="STRING" id="10090.ENSMUSP00000011493"/>
<dbReference type="PhosphoSitePlus" id="Q8CGW9"/>
<dbReference type="PaxDb" id="10090-ENSMUSP00000011493"/>
<dbReference type="ProteomicsDB" id="279389"/>
<dbReference type="Antibodypedia" id="30826">
    <property type="antibodies" value="127 antibodies from 22 providers"/>
</dbReference>
<dbReference type="DNASU" id="71241"/>
<dbReference type="Ensembl" id="ENSMUST00000011493.6">
    <property type="protein sequence ID" value="ENSMUSP00000011493.6"/>
    <property type="gene ID" value="ENSMUSG00000011349.6"/>
</dbReference>
<dbReference type="GeneID" id="71241"/>
<dbReference type="KEGG" id="mmu:71241"/>
<dbReference type="UCSC" id="uc009fqp.2">
    <property type="organism name" value="mouse"/>
</dbReference>
<dbReference type="AGR" id="MGI:1918491"/>
<dbReference type="CTD" id="63946"/>
<dbReference type="MGI" id="MGI:1918491">
    <property type="gene designation" value="Dmrtc2"/>
</dbReference>
<dbReference type="VEuPathDB" id="HostDB:ENSMUSG00000011349"/>
<dbReference type="eggNOG" id="KOG3815">
    <property type="taxonomic scope" value="Eukaryota"/>
</dbReference>
<dbReference type="GeneTree" id="ENSGT00940000161904"/>
<dbReference type="HOGENOM" id="CLU_050863_1_0_1"/>
<dbReference type="InParanoid" id="Q8CGW9"/>
<dbReference type="OMA" id="PLPWTPM"/>
<dbReference type="OrthoDB" id="6162476at2759"/>
<dbReference type="PhylomeDB" id="Q8CGW9"/>
<dbReference type="TreeFam" id="TF340713"/>
<dbReference type="BioGRID-ORCS" id="71241">
    <property type="hits" value="1 hit in 78 CRISPR screens"/>
</dbReference>
<dbReference type="ChiTaRS" id="Dmrtc2">
    <property type="organism name" value="mouse"/>
</dbReference>
<dbReference type="PRO" id="PR:Q8CGW9"/>
<dbReference type="Proteomes" id="UP000000589">
    <property type="component" value="Chromosome 7"/>
</dbReference>
<dbReference type="RNAct" id="Q8CGW9">
    <property type="molecule type" value="protein"/>
</dbReference>
<dbReference type="Bgee" id="ENSMUSG00000011349">
    <property type="expression patterns" value="Expressed in seminiferous tubule of testis and 16 other cell types or tissues"/>
</dbReference>
<dbReference type="GO" id="GO:0005634">
    <property type="term" value="C:nucleus"/>
    <property type="evidence" value="ECO:0007669"/>
    <property type="project" value="UniProtKB-SubCell"/>
</dbReference>
<dbReference type="GO" id="GO:0001741">
    <property type="term" value="C:XY body"/>
    <property type="evidence" value="ECO:0000314"/>
    <property type="project" value="MGI"/>
</dbReference>
<dbReference type="GO" id="GO:0042802">
    <property type="term" value="F:identical protein binding"/>
    <property type="evidence" value="ECO:0000353"/>
    <property type="project" value="MGI"/>
</dbReference>
<dbReference type="GO" id="GO:0046872">
    <property type="term" value="F:metal ion binding"/>
    <property type="evidence" value="ECO:0007669"/>
    <property type="project" value="UniProtKB-KW"/>
</dbReference>
<dbReference type="GO" id="GO:0043565">
    <property type="term" value="F:sequence-specific DNA binding"/>
    <property type="evidence" value="ECO:0000314"/>
    <property type="project" value="MGI"/>
</dbReference>
<dbReference type="GO" id="GO:1990837">
    <property type="term" value="F:sequence-specific double-stranded DNA binding"/>
    <property type="evidence" value="ECO:0007669"/>
    <property type="project" value="Ensembl"/>
</dbReference>
<dbReference type="GO" id="GO:0070828">
    <property type="term" value="P:heterochromatin organization"/>
    <property type="evidence" value="ECO:0000315"/>
    <property type="project" value="MGI"/>
</dbReference>
<dbReference type="GO" id="GO:0007141">
    <property type="term" value="P:male meiosis I"/>
    <property type="evidence" value="ECO:0000315"/>
    <property type="project" value="MGI"/>
</dbReference>
<dbReference type="GO" id="GO:0006355">
    <property type="term" value="P:regulation of DNA-templated transcription"/>
    <property type="evidence" value="ECO:0007669"/>
    <property type="project" value="InterPro"/>
</dbReference>
<dbReference type="GO" id="GO:0007548">
    <property type="term" value="P:sex differentiation"/>
    <property type="evidence" value="ECO:0007669"/>
    <property type="project" value="UniProtKB-KW"/>
</dbReference>
<dbReference type="GO" id="GO:0007290">
    <property type="term" value="P:spermatid nucleus elongation"/>
    <property type="evidence" value="ECO:0000315"/>
    <property type="project" value="MGI"/>
</dbReference>
<dbReference type="FunFam" id="4.10.1040.10:FF:000001">
    <property type="entry name" value="doublesex- and mab-3-related transcription factor 1"/>
    <property type="match status" value="1"/>
</dbReference>
<dbReference type="Gene3D" id="4.10.1040.10">
    <property type="entry name" value="DM DNA-binding domain"/>
    <property type="match status" value="1"/>
</dbReference>
<dbReference type="InterPro" id="IPR001275">
    <property type="entry name" value="DM_DNA-bd"/>
</dbReference>
<dbReference type="InterPro" id="IPR036407">
    <property type="entry name" value="DM_DNA-bd_sf"/>
</dbReference>
<dbReference type="InterPro" id="IPR026607">
    <property type="entry name" value="DMRT"/>
</dbReference>
<dbReference type="InterPro" id="IPR031577">
    <property type="entry name" value="DMRT-C1/C2_C"/>
</dbReference>
<dbReference type="PANTHER" id="PTHR12322">
    <property type="entry name" value="DOUBLESEX AND MAB-3 RELATED TRANSCRIPTION FACTOR DMRT"/>
    <property type="match status" value="1"/>
</dbReference>
<dbReference type="PANTHER" id="PTHR12322:SF126">
    <property type="entry name" value="DOUBLESEX- AND MAB-3-RELATED TRANSCRIPTION FACTOR C2"/>
    <property type="match status" value="1"/>
</dbReference>
<dbReference type="Pfam" id="PF00751">
    <property type="entry name" value="DM"/>
    <property type="match status" value="1"/>
</dbReference>
<dbReference type="Pfam" id="PF15791">
    <property type="entry name" value="DMRT-like"/>
    <property type="match status" value="1"/>
</dbReference>
<dbReference type="SMART" id="SM00301">
    <property type="entry name" value="DM"/>
    <property type="match status" value="1"/>
</dbReference>
<dbReference type="SUPFAM" id="SSF82927">
    <property type="entry name" value="Cysteine-rich DNA binding domain, (DM domain)"/>
    <property type="match status" value="1"/>
</dbReference>
<dbReference type="PROSITE" id="PS40000">
    <property type="entry name" value="DM_1"/>
    <property type="match status" value="1"/>
</dbReference>
<dbReference type="PROSITE" id="PS50809">
    <property type="entry name" value="DM_2"/>
    <property type="match status" value="1"/>
</dbReference>
<proteinExistence type="evidence at transcript level"/>
<accession>Q8CGW9</accession>
<accession>A6H6T0</accession>